<keyword id="KW-0002">3D-structure</keyword>
<keyword id="KW-0028">Amino-acid biosynthesis</keyword>
<keyword id="KW-0057">Aromatic amino acid biosynthesis</keyword>
<keyword id="KW-0210">Decarboxylase</keyword>
<keyword id="KW-0456">Lyase</keyword>
<keyword id="KW-1185">Reference proteome</keyword>
<keyword id="KW-0822">Tryptophan biosynthesis</keyword>
<comment type="catalytic activity">
    <reaction>
        <text>1-(2-carboxyphenylamino)-1-deoxy-D-ribulose 5-phosphate + H(+) = (1S,2R)-1-C-(indol-3-yl)glycerol 3-phosphate + CO2 + H2O</text>
        <dbReference type="Rhea" id="RHEA:23476"/>
        <dbReference type="ChEBI" id="CHEBI:15377"/>
        <dbReference type="ChEBI" id="CHEBI:15378"/>
        <dbReference type="ChEBI" id="CHEBI:16526"/>
        <dbReference type="ChEBI" id="CHEBI:58613"/>
        <dbReference type="ChEBI" id="CHEBI:58866"/>
        <dbReference type="EC" id="4.1.1.48"/>
    </reaction>
</comment>
<comment type="pathway">
    <text>Amino-acid biosynthesis; L-tryptophan biosynthesis; L-tryptophan from chorismate: step 4/5.</text>
</comment>
<comment type="subunit">
    <text>Monomer.</text>
</comment>
<comment type="similarity">
    <text evidence="1">Belongs to the TrpC family.</text>
</comment>
<evidence type="ECO:0000305" key="1"/>
<evidence type="ECO:0007829" key="2">
    <source>
        <dbReference type="PDB" id="2C3Z"/>
    </source>
</evidence>
<evidence type="ECO:0007829" key="3">
    <source>
        <dbReference type="PDB" id="3NYZ"/>
    </source>
</evidence>
<evidence type="ECO:0007829" key="4">
    <source>
        <dbReference type="PDB" id="4A29"/>
    </source>
</evidence>
<reference key="1">
    <citation type="journal article" date="1993" name="J. Bacteriol.">
        <title>Tryptophan biosynthesis genes trpEGC in the thermoacidophilic archaebacterium Sulfolobus solfataricus.</title>
        <authorList>
            <person name="Tutino M.L."/>
            <person name="Scarano G."/>
            <person name="Marino G."/>
            <person name="Sannia G."/>
            <person name="Cubellis M.V."/>
        </authorList>
    </citation>
    <scope>NUCLEOTIDE SEQUENCE [GENOMIC DNA]</scope>
    <source>
        <strain>DSM 5833 / MT-4</strain>
    </source>
</reference>
<reference key="2">
    <citation type="submission" date="1995-07" db="EMBL/GenBank/DDBJ databases">
        <title>The tryptophan operon in Sulfolobus solfataricus.</title>
        <authorList>
            <person name="Tutino M.L."/>
            <person name="Cubellis M."/>
            <person name="Sannia G."/>
            <person name="Marino G."/>
        </authorList>
    </citation>
    <scope>NUCLEOTIDE SEQUENCE [GENOMIC DNA]</scope>
    <source>
        <strain>DSM 5833 / MT-4</strain>
    </source>
</reference>
<reference key="3">
    <citation type="journal article" date="2001" name="Proc. Natl. Acad. Sci. U.S.A.">
        <title>The complete genome of the crenarchaeon Sulfolobus solfataricus P2.</title>
        <authorList>
            <person name="She Q."/>
            <person name="Singh R.K."/>
            <person name="Confalonieri F."/>
            <person name="Zivanovic Y."/>
            <person name="Allard G."/>
            <person name="Awayez M.J."/>
            <person name="Chan-Weiher C.C.-Y."/>
            <person name="Clausen I.G."/>
            <person name="Curtis B.A."/>
            <person name="De Moors A."/>
            <person name="Erauso G."/>
            <person name="Fletcher C."/>
            <person name="Gordon P.M.K."/>
            <person name="Heikamp-de Jong I."/>
            <person name="Jeffries A.C."/>
            <person name="Kozera C.J."/>
            <person name="Medina N."/>
            <person name="Peng X."/>
            <person name="Thi-Ngoc H.P."/>
            <person name="Redder P."/>
            <person name="Schenk M.E."/>
            <person name="Theriault C."/>
            <person name="Tolstrup N."/>
            <person name="Charlebois R.L."/>
            <person name="Doolittle W.F."/>
            <person name="Duguet M."/>
            <person name="Gaasterland T."/>
            <person name="Garrett R.A."/>
            <person name="Ragan M.A."/>
            <person name="Sensen C.W."/>
            <person name="Van der Oost J."/>
        </authorList>
    </citation>
    <scope>NUCLEOTIDE SEQUENCE [LARGE SCALE GENOMIC DNA]</scope>
    <source>
        <strain>ATCC 35092 / DSM 1617 / JCM 11322 / P2</strain>
    </source>
</reference>
<reference key="4">
    <citation type="journal article" date="1995" name="Structure">
        <title>2.0-A structure of indole-3-glycerol phosphate synthase from the hyperthermophile Sulfolobus solfataricus: possible determinants of protein stability.</title>
        <authorList>
            <person name="Hennig M."/>
            <person name="Darimont B."/>
            <person name="Kirschner K."/>
            <person name="Jansonius J.N."/>
        </authorList>
    </citation>
    <scope>X-RAY CRYSTALLOGRAPHY (2.0 ANGSTROMS)</scope>
</reference>
<reference key="5">
    <citation type="journal article" date="1996" name="J. Mol. Biol.">
        <title>The crystal structure of indole-3-glycerol phosphate synthase from the hyperthermophilic archaeon Sulfolobus solfataricus in three different crystal forms: effects of ionic strength.</title>
        <authorList>
            <person name="Knoechel T.R."/>
            <person name="Hennig M."/>
            <person name="Merz A."/>
            <person name="Darimont B."/>
            <person name="Kirschner K."/>
            <person name="Jansonius J.N."/>
        </authorList>
    </citation>
    <scope>X-RAY CRYSTALLOGRAPHY (2.0 ANGSTROMS)</scope>
</reference>
<reference key="6">
    <citation type="submission" date="1998-02" db="PDB data bank">
        <title>The catalytic mechanism of indole-3-glycerolphosphate synthase: crystal structure of substrate, product and substrate analogue bound to the enzyme from Sulfolobus solfataricus.</title>
        <authorList>
            <person name="Hennig M."/>
            <person name="Darimont B."/>
            <person name="Kirschner K."/>
            <person name="Jansonius J.N."/>
        </authorList>
    </citation>
    <scope>X-RAY CRYSTALLOGRAPHY (2.0 ANGSTROMS)</scope>
</reference>
<dbReference type="EC" id="4.1.1.48"/>
<dbReference type="EMBL" id="M98048">
    <property type="protein sequence ID" value="AAA73381.1"/>
    <property type="molecule type" value="Genomic_DNA"/>
</dbReference>
<dbReference type="EMBL" id="Z50014">
    <property type="protein sequence ID" value="CAA90313.1"/>
    <property type="molecule type" value="Genomic_DNA"/>
</dbReference>
<dbReference type="EMBL" id="AE006641">
    <property type="protein sequence ID" value="AAK41177.1"/>
    <property type="molecule type" value="Genomic_DNA"/>
</dbReference>
<dbReference type="PIR" id="C40635">
    <property type="entry name" value="C40635"/>
</dbReference>
<dbReference type="PIR" id="S50179">
    <property type="entry name" value="S50179"/>
</dbReference>
<dbReference type="RefSeq" id="WP_009992313.1">
    <property type="nucleotide sequence ID" value="NC_002754.1"/>
</dbReference>
<dbReference type="PDB" id="1A53">
    <property type="method" value="X-ray"/>
    <property type="resolution" value="2.00 A"/>
    <property type="chains" value="A=2-248"/>
</dbReference>
<dbReference type="PDB" id="1IGS">
    <property type="method" value="X-ray"/>
    <property type="resolution" value="2.00 A"/>
    <property type="chains" value="A=1-248"/>
</dbReference>
<dbReference type="PDB" id="1JUK">
    <property type="method" value="X-ray"/>
    <property type="resolution" value="2.50 A"/>
    <property type="chains" value="A=1-248"/>
</dbReference>
<dbReference type="PDB" id="1JUL">
    <property type="method" value="X-ray"/>
    <property type="resolution" value="2.00 A"/>
    <property type="chains" value="A=1-248"/>
</dbReference>
<dbReference type="PDB" id="1LBF">
    <property type="method" value="X-ray"/>
    <property type="resolution" value="2.05 A"/>
    <property type="chains" value="A=2-248"/>
</dbReference>
<dbReference type="PDB" id="1LBL">
    <property type="method" value="X-ray"/>
    <property type="resolution" value="2.40 A"/>
    <property type="chains" value="A=2-248"/>
</dbReference>
<dbReference type="PDB" id="2C3Z">
    <property type="method" value="X-ray"/>
    <property type="resolution" value="2.80 A"/>
    <property type="chains" value="A=27-248"/>
</dbReference>
<dbReference type="PDB" id="3NYZ">
    <property type="method" value="X-ray"/>
    <property type="resolution" value="1.51 A"/>
    <property type="chains" value="A/B=1-248"/>
</dbReference>
<dbReference type="PDB" id="3NZ1">
    <property type="method" value="X-ray"/>
    <property type="resolution" value="1.56 A"/>
    <property type="chains" value="A=1-248"/>
</dbReference>
<dbReference type="PDB" id="3TC6">
    <property type="method" value="X-ray"/>
    <property type="resolution" value="1.60 A"/>
    <property type="chains" value="A=1-245"/>
</dbReference>
<dbReference type="PDB" id="3TC7">
    <property type="method" value="X-ray"/>
    <property type="resolution" value="1.50 A"/>
    <property type="chains" value="A=1-245"/>
</dbReference>
<dbReference type="PDB" id="4A29">
    <property type="method" value="X-ray"/>
    <property type="resolution" value="1.10 A"/>
    <property type="chains" value="A=1-247"/>
</dbReference>
<dbReference type="PDB" id="4A2R">
    <property type="method" value="X-ray"/>
    <property type="resolution" value="1.30 A"/>
    <property type="chains" value="A=1-245"/>
</dbReference>
<dbReference type="PDB" id="4A2S">
    <property type="method" value="X-ray"/>
    <property type="resolution" value="1.40 A"/>
    <property type="chains" value="A=1-245"/>
</dbReference>
<dbReference type="PDB" id="4IWW">
    <property type="method" value="X-ray"/>
    <property type="resolution" value="2.30 A"/>
    <property type="chains" value="A/B=2-248"/>
</dbReference>
<dbReference type="PDB" id="4IX0">
    <property type="method" value="X-ray"/>
    <property type="resolution" value="2.50 A"/>
    <property type="chains" value="A=2-248"/>
</dbReference>
<dbReference type="PDB" id="4LNY">
    <property type="method" value="X-ray"/>
    <property type="resolution" value="1.93 A"/>
    <property type="chains" value="A=1-247"/>
</dbReference>
<dbReference type="PDB" id="4OU1">
    <property type="method" value="X-ray"/>
    <property type="resolution" value="1.25 A"/>
    <property type="chains" value="A=1-247"/>
</dbReference>
<dbReference type="PDB" id="5AN7">
    <property type="method" value="X-ray"/>
    <property type="resolution" value="1.10 A"/>
    <property type="chains" value="A=1-247"/>
</dbReference>
<dbReference type="PDB" id="5AOU">
    <property type="method" value="X-ray"/>
    <property type="resolution" value="1.10 A"/>
    <property type="chains" value="A=1-245"/>
</dbReference>
<dbReference type="PDB" id="5K7J">
    <property type="method" value="X-ray"/>
    <property type="resolution" value="1.39 A"/>
    <property type="chains" value="A/B=2-248"/>
</dbReference>
<dbReference type="PDB" id="6NW4">
    <property type="method" value="X-ray"/>
    <property type="resolution" value="3.00 A"/>
    <property type="chains" value="A=2-248"/>
</dbReference>
<dbReference type="PDBsum" id="1A53"/>
<dbReference type="PDBsum" id="1IGS"/>
<dbReference type="PDBsum" id="1JUK"/>
<dbReference type="PDBsum" id="1JUL"/>
<dbReference type="PDBsum" id="1LBF"/>
<dbReference type="PDBsum" id="1LBL"/>
<dbReference type="PDBsum" id="2C3Z"/>
<dbReference type="PDBsum" id="3NYZ"/>
<dbReference type="PDBsum" id="3NZ1"/>
<dbReference type="PDBsum" id="3TC6"/>
<dbReference type="PDBsum" id="3TC7"/>
<dbReference type="PDBsum" id="4A29"/>
<dbReference type="PDBsum" id="4A2R"/>
<dbReference type="PDBsum" id="4A2S"/>
<dbReference type="PDBsum" id="4IWW"/>
<dbReference type="PDBsum" id="4IX0"/>
<dbReference type="PDBsum" id="4LNY"/>
<dbReference type="PDBsum" id="4OU1"/>
<dbReference type="PDBsum" id="5AN7"/>
<dbReference type="PDBsum" id="5AOU"/>
<dbReference type="PDBsum" id="5K7J"/>
<dbReference type="PDBsum" id="6NW4"/>
<dbReference type="SMR" id="Q06121"/>
<dbReference type="FunCoup" id="Q06121">
    <property type="interactions" value="132"/>
</dbReference>
<dbReference type="STRING" id="273057.SSO0895"/>
<dbReference type="PaxDb" id="273057-SSO0895"/>
<dbReference type="EnsemblBacteria" id="AAK41177">
    <property type="protein sequence ID" value="AAK41177"/>
    <property type="gene ID" value="SSO0895"/>
</dbReference>
<dbReference type="GeneID" id="44129825"/>
<dbReference type="KEGG" id="sso:SSO0895"/>
<dbReference type="PATRIC" id="fig|273057.12.peg.898"/>
<dbReference type="eggNOG" id="arCOG01088">
    <property type="taxonomic scope" value="Archaea"/>
</dbReference>
<dbReference type="HOGENOM" id="CLU_034247_0_1_2"/>
<dbReference type="InParanoid" id="Q06121"/>
<dbReference type="PhylomeDB" id="Q06121"/>
<dbReference type="BioCyc" id="MetaCyc:MONOMER-3602"/>
<dbReference type="BRENDA" id="4.1.1.48">
    <property type="organism ID" value="6163"/>
</dbReference>
<dbReference type="SABIO-RK" id="Q06121"/>
<dbReference type="UniPathway" id="UPA00035">
    <property type="reaction ID" value="UER00043"/>
</dbReference>
<dbReference type="EvolutionaryTrace" id="Q06121"/>
<dbReference type="Proteomes" id="UP000001974">
    <property type="component" value="Chromosome"/>
</dbReference>
<dbReference type="GO" id="GO:0004425">
    <property type="term" value="F:indole-3-glycerol-phosphate synthase activity"/>
    <property type="evidence" value="ECO:0000318"/>
    <property type="project" value="GO_Central"/>
</dbReference>
<dbReference type="GO" id="GO:0004640">
    <property type="term" value="F:phosphoribosylanthranilate isomerase activity"/>
    <property type="evidence" value="ECO:0000318"/>
    <property type="project" value="GO_Central"/>
</dbReference>
<dbReference type="GO" id="GO:0000162">
    <property type="term" value="P:L-tryptophan biosynthetic process"/>
    <property type="evidence" value="ECO:0000318"/>
    <property type="project" value="GO_Central"/>
</dbReference>
<dbReference type="CDD" id="cd00331">
    <property type="entry name" value="IGPS"/>
    <property type="match status" value="1"/>
</dbReference>
<dbReference type="FunFam" id="3.20.20.70:FF:000411">
    <property type="entry name" value="Indole-3-glycerol phosphate synthase"/>
    <property type="match status" value="1"/>
</dbReference>
<dbReference type="Gene3D" id="3.20.20.70">
    <property type="entry name" value="Aldolase class I"/>
    <property type="match status" value="1"/>
</dbReference>
<dbReference type="HAMAP" id="MF_00134_A">
    <property type="entry name" value="IGPS_A"/>
    <property type="match status" value="1"/>
</dbReference>
<dbReference type="InterPro" id="IPR013785">
    <property type="entry name" value="Aldolase_TIM"/>
</dbReference>
<dbReference type="InterPro" id="IPR045186">
    <property type="entry name" value="Indole-3-glycerol_P_synth"/>
</dbReference>
<dbReference type="InterPro" id="IPR013798">
    <property type="entry name" value="Indole-3-glycerol_P_synth_dom"/>
</dbReference>
<dbReference type="InterPro" id="IPR001468">
    <property type="entry name" value="Indole-3-GlycerolPSynthase_CS"/>
</dbReference>
<dbReference type="InterPro" id="IPR011060">
    <property type="entry name" value="RibuloseP-bd_barrel"/>
</dbReference>
<dbReference type="NCBIfam" id="NF001374">
    <property type="entry name" value="PRK00278.2-1"/>
    <property type="match status" value="1"/>
</dbReference>
<dbReference type="PANTHER" id="PTHR22854:SF2">
    <property type="entry name" value="INDOLE-3-GLYCEROL-PHOSPHATE SYNTHASE"/>
    <property type="match status" value="1"/>
</dbReference>
<dbReference type="PANTHER" id="PTHR22854">
    <property type="entry name" value="TRYPTOPHAN BIOSYNTHESIS PROTEIN"/>
    <property type="match status" value="1"/>
</dbReference>
<dbReference type="Pfam" id="PF00218">
    <property type="entry name" value="IGPS"/>
    <property type="match status" value="1"/>
</dbReference>
<dbReference type="SUPFAM" id="SSF51366">
    <property type="entry name" value="Ribulose-phoshate binding barrel"/>
    <property type="match status" value="1"/>
</dbReference>
<dbReference type="PROSITE" id="PS00614">
    <property type="entry name" value="IGPS"/>
    <property type="match status" value="1"/>
</dbReference>
<organism>
    <name type="scientific">Saccharolobus solfataricus (strain ATCC 35092 / DSM 1617 / JCM 11322 / P2)</name>
    <name type="common">Sulfolobus solfataricus</name>
    <dbReference type="NCBI Taxonomy" id="273057"/>
    <lineage>
        <taxon>Archaea</taxon>
        <taxon>Thermoproteota</taxon>
        <taxon>Thermoprotei</taxon>
        <taxon>Sulfolobales</taxon>
        <taxon>Sulfolobaceae</taxon>
        <taxon>Saccharolobus</taxon>
    </lineage>
</organism>
<accession>Q06121</accession>
<accession>P50385</accession>
<gene>
    <name type="primary">trpC</name>
    <name type="ordered locus">SSO0895</name>
</gene>
<name>TRPC_SACS2</name>
<protein>
    <recommendedName>
        <fullName>Indole-3-glycerol phosphate synthase</fullName>
        <shortName>IGPS</shortName>
        <ecNumber>4.1.1.48</ecNumber>
    </recommendedName>
</protein>
<feature type="chain" id="PRO_0000154302" description="Indole-3-glycerol phosphate synthase">
    <location>
        <begin position="1"/>
        <end position="248"/>
    </location>
</feature>
<feature type="helix" evidence="4">
    <location>
        <begin position="7"/>
        <end position="17"/>
    </location>
</feature>
<feature type="strand" evidence="3">
    <location>
        <begin position="21"/>
        <end position="23"/>
    </location>
</feature>
<feature type="helix" evidence="4">
    <location>
        <begin position="33"/>
        <end position="42"/>
    </location>
</feature>
<feature type="strand" evidence="4">
    <location>
        <begin position="48"/>
        <end position="52"/>
    </location>
</feature>
<feature type="strand" evidence="2">
    <location>
        <begin position="57"/>
        <end position="59"/>
    </location>
</feature>
<feature type="helix" evidence="4">
    <location>
        <begin position="66"/>
        <end position="73"/>
    </location>
</feature>
<feature type="turn" evidence="4">
    <location>
        <begin position="74"/>
        <end position="76"/>
    </location>
</feature>
<feature type="strand" evidence="4">
    <location>
        <begin position="78"/>
        <end position="83"/>
    </location>
</feature>
<feature type="turn" evidence="4">
    <location>
        <begin position="87"/>
        <end position="89"/>
    </location>
</feature>
<feature type="helix" evidence="4">
    <location>
        <begin position="93"/>
        <end position="100"/>
    </location>
</feature>
<feature type="strand" evidence="4">
    <location>
        <begin position="107"/>
        <end position="111"/>
    </location>
</feature>
<feature type="helix" evidence="4">
    <location>
        <begin position="116"/>
        <end position="125"/>
    </location>
</feature>
<feature type="strand" evidence="4">
    <location>
        <begin position="128"/>
        <end position="133"/>
    </location>
</feature>
<feature type="helix" evidence="4">
    <location>
        <begin position="134"/>
        <end position="136"/>
    </location>
</feature>
<feature type="helix" evidence="4">
    <location>
        <begin position="139"/>
        <end position="151"/>
    </location>
</feature>
<feature type="strand" evidence="4">
    <location>
        <begin position="157"/>
        <end position="162"/>
    </location>
</feature>
<feature type="helix" evidence="4">
    <location>
        <begin position="163"/>
        <end position="171"/>
    </location>
</feature>
<feature type="strand" evidence="4">
    <location>
        <begin position="175"/>
        <end position="179"/>
    </location>
</feature>
<feature type="turn" evidence="4">
    <location>
        <begin position="184"/>
        <end position="186"/>
    </location>
</feature>
<feature type="helix" evidence="4">
    <location>
        <begin position="191"/>
        <end position="198"/>
    </location>
</feature>
<feature type="strand" evidence="4">
    <location>
        <begin position="205"/>
        <end position="213"/>
    </location>
</feature>
<feature type="helix" evidence="4">
    <location>
        <begin position="216"/>
        <end position="224"/>
    </location>
</feature>
<feature type="strand" evidence="4">
    <location>
        <begin position="229"/>
        <end position="232"/>
    </location>
</feature>
<feature type="helix" evidence="4">
    <location>
        <begin position="234"/>
        <end position="238"/>
    </location>
</feature>
<feature type="helix" evidence="4">
    <location>
        <begin position="242"/>
        <end position="247"/>
    </location>
</feature>
<sequence>MPRYLKGWLKDVVQLSLRRPSFRASRQRPIISLNERILEFNKRNITAIIAEYKRKSPSGLDVERDPIEYSKFMERYAVGLSILTEEKYFNGSYETLRKIASSVSIPILMKDFIVKESQIDDAYNLGADTVLLIVKILTERELESLLEYARSYGMEPLIEINDENDLDIALRIGARFIGINSRDLETLEINKENQRKLISMIPSNVVKVAESGISERNEIEELRKLGVNAFLIGSSLMRNPEKIKEFIL</sequence>
<proteinExistence type="evidence at protein level"/>